<feature type="chain" id="PRO_1000057990" description="Phosphoglycerate kinase">
    <location>
        <begin position="1"/>
        <end position="392"/>
    </location>
</feature>
<feature type="binding site" evidence="1">
    <location>
        <begin position="21"/>
        <end position="23"/>
    </location>
    <ligand>
        <name>substrate</name>
    </ligand>
</feature>
<feature type="binding site" evidence="1">
    <location>
        <position position="36"/>
    </location>
    <ligand>
        <name>substrate</name>
    </ligand>
</feature>
<feature type="binding site" evidence="1">
    <location>
        <begin position="59"/>
        <end position="62"/>
    </location>
    <ligand>
        <name>substrate</name>
    </ligand>
</feature>
<feature type="binding site" evidence="1">
    <location>
        <position position="113"/>
    </location>
    <ligand>
        <name>substrate</name>
    </ligand>
</feature>
<feature type="binding site" evidence="1">
    <location>
        <position position="146"/>
    </location>
    <ligand>
        <name>substrate</name>
    </ligand>
</feature>
<feature type="binding site" evidence="1">
    <location>
        <position position="197"/>
    </location>
    <ligand>
        <name>ATP</name>
        <dbReference type="ChEBI" id="CHEBI:30616"/>
    </ligand>
</feature>
<feature type="binding site" evidence="1">
    <location>
        <position position="319"/>
    </location>
    <ligand>
        <name>ATP</name>
        <dbReference type="ChEBI" id="CHEBI:30616"/>
    </ligand>
</feature>
<feature type="binding site" evidence="1">
    <location>
        <begin position="345"/>
        <end position="348"/>
    </location>
    <ligand>
        <name>ATP</name>
        <dbReference type="ChEBI" id="CHEBI:30616"/>
    </ligand>
</feature>
<keyword id="KW-0067">ATP-binding</keyword>
<keyword id="KW-0963">Cytoplasm</keyword>
<keyword id="KW-0324">Glycolysis</keyword>
<keyword id="KW-0418">Kinase</keyword>
<keyword id="KW-0547">Nucleotide-binding</keyword>
<keyword id="KW-0808">Transferase</keyword>
<evidence type="ECO:0000255" key="1">
    <source>
        <dbReference type="HAMAP-Rule" id="MF_00145"/>
    </source>
</evidence>
<comment type="catalytic activity">
    <reaction evidence="1">
        <text>(2R)-3-phosphoglycerate + ATP = (2R)-3-phospho-glyceroyl phosphate + ADP</text>
        <dbReference type="Rhea" id="RHEA:14801"/>
        <dbReference type="ChEBI" id="CHEBI:30616"/>
        <dbReference type="ChEBI" id="CHEBI:57604"/>
        <dbReference type="ChEBI" id="CHEBI:58272"/>
        <dbReference type="ChEBI" id="CHEBI:456216"/>
        <dbReference type="EC" id="2.7.2.3"/>
    </reaction>
</comment>
<comment type="pathway">
    <text evidence="1">Carbohydrate degradation; glycolysis; pyruvate from D-glyceraldehyde 3-phosphate: step 2/5.</text>
</comment>
<comment type="subunit">
    <text evidence="1">Monomer.</text>
</comment>
<comment type="subcellular location">
    <subcellularLocation>
        <location evidence="1">Cytoplasm</location>
    </subcellularLocation>
</comment>
<comment type="similarity">
    <text evidence="1">Belongs to the phosphoglycerate kinase family.</text>
</comment>
<name>PGK_FRATF</name>
<proteinExistence type="inferred from homology"/>
<accession>A7NCI3</accession>
<reference key="1">
    <citation type="journal article" date="2009" name="PLoS ONE">
        <title>Complete genome sequence of Francisella tularensis subspecies holarctica FTNF002-00.</title>
        <authorList>
            <person name="Barabote R.D."/>
            <person name="Xie G."/>
            <person name="Brettin T.S."/>
            <person name="Hinrichs S.H."/>
            <person name="Fey P.D."/>
            <person name="Jay J.J."/>
            <person name="Engle J.L."/>
            <person name="Godbole S.D."/>
            <person name="Noronha J.M."/>
            <person name="Scheuermann R.H."/>
            <person name="Zhou L.W."/>
            <person name="Lion C."/>
            <person name="Dempsey M.P."/>
        </authorList>
    </citation>
    <scope>NUCLEOTIDE SEQUENCE [LARGE SCALE GENOMIC DNA]</scope>
    <source>
        <strain>FTNF002-00 / FTA</strain>
    </source>
</reference>
<protein>
    <recommendedName>
        <fullName evidence="1">Phosphoglycerate kinase</fullName>
        <ecNumber evidence="1">2.7.2.3</ecNumber>
    </recommendedName>
</protein>
<gene>
    <name evidence="1" type="primary">pgk</name>
    <name type="ordered locus">FTA_1210</name>
</gene>
<sequence length="392" mass="42011">MSFLTLKDVDLKDKKVLVRVDFNVPVKDGKVTSKVRIEAAIPTIQYILDQGGAVILMSHLGRPTEGEYDSQFSLEPVAKALSEIINKPVKFAKDWLDGVDVKAGEIVMCENVRFNIGEKKSTDDLSKKIASLGDVFVMDAFATAHRAQASTYGVAKYIPVACAGILLTNEIQALEKALKSPKKPMAAIVGGSKVSTKLSVLNNLLDKVEILIVGGGIANTFIKAEGFDVGNSLYEQDLVAEATEILAKAKALGVNIPVPVDVRVAKEFSENAQAIIKKVSYVVADEMILDIGPESQKIIAELLKSANTILWNGPVGVFEFDNFAEGTKALSLAIAQSHAFSVAGGGDTIAAIEKFGIKDQVSYISTAGGAFLEFLEGKKLPAIEILKEKAIR</sequence>
<dbReference type="EC" id="2.7.2.3" evidence="1"/>
<dbReference type="EMBL" id="CP000803">
    <property type="protein sequence ID" value="ABU61686.1"/>
    <property type="molecule type" value="Genomic_DNA"/>
</dbReference>
<dbReference type="RefSeq" id="WP_003016144.1">
    <property type="nucleotide sequence ID" value="NC_009749.1"/>
</dbReference>
<dbReference type="SMR" id="A7NCI3"/>
<dbReference type="KEGG" id="fta:FTA_1210"/>
<dbReference type="HOGENOM" id="CLU_025427_0_2_6"/>
<dbReference type="UniPathway" id="UPA00109">
    <property type="reaction ID" value="UER00185"/>
</dbReference>
<dbReference type="GO" id="GO:0005829">
    <property type="term" value="C:cytosol"/>
    <property type="evidence" value="ECO:0007669"/>
    <property type="project" value="TreeGrafter"/>
</dbReference>
<dbReference type="GO" id="GO:0043531">
    <property type="term" value="F:ADP binding"/>
    <property type="evidence" value="ECO:0007669"/>
    <property type="project" value="TreeGrafter"/>
</dbReference>
<dbReference type="GO" id="GO:0005524">
    <property type="term" value="F:ATP binding"/>
    <property type="evidence" value="ECO:0007669"/>
    <property type="project" value="UniProtKB-KW"/>
</dbReference>
<dbReference type="GO" id="GO:0004618">
    <property type="term" value="F:phosphoglycerate kinase activity"/>
    <property type="evidence" value="ECO:0007669"/>
    <property type="project" value="UniProtKB-UniRule"/>
</dbReference>
<dbReference type="GO" id="GO:0006094">
    <property type="term" value="P:gluconeogenesis"/>
    <property type="evidence" value="ECO:0007669"/>
    <property type="project" value="TreeGrafter"/>
</dbReference>
<dbReference type="GO" id="GO:0006096">
    <property type="term" value="P:glycolytic process"/>
    <property type="evidence" value="ECO:0007669"/>
    <property type="project" value="UniProtKB-UniRule"/>
</dbReference>
<dbReference type="FunFam" id="3.40.50.1260:FF:000001">
    <property type="entry name" value="Phosphoglycerate kinase"/>
    <property type="match status" value="1"/>
</dbReference>
<dbReference type="FunFam" id="3.40.50.1260:FF:000005">
    <property type="entry name" value="Phosphoglycerate kinase"/>
    <property type="match status" value="1"/>
</dbReference>
<dbReference type="Gene3D" id="3.40.50.1260">
    <property type="entry name" value="Phosphoglycerate kinase, N-terminal domain"/>
    <property type="match status" value="2"/>
</dbReference>
<dbReference type="HAMAP" id="MF_00145">
    <property type="entry name" value="Phosphoglyc_kinase"/>
    <property type="match status" value="1"/>
</dbReference>
<dbReference type="InterPro" id="IPR001576">
    <property type="entry name" value="Phosphoglycerate_kinase"/>
</dbReference>
<dbReference type="InterPro" id="IPR015911">
    <property type="entry name" value="Phosphoglycerate_kinase_CS"/>
</dbReference>
<dbReference type="InterPro" id="IPR015824">
    <property type="entry name" value="Phosphoglycerate_kinase_N"/>
</dbReference>
<dbReference type="InterPro" id="IPR036043">
    <property type="entry name" value="Phosphoglycerate_kinase_sf"/>
</dbReference>
<dbReference type="PANTHER" id="PTHR11406">
    <property type="entry name" value="PHOSPHOGLYCERATE KINASE"/>
    <property type="match status" value="1"/>
</dbReference>
<dbReference type="PANTHER" id="PTHR11406:SF23">
    <property type="entry name" value="PHOSPHOGLYCERATE KINASE 1, CHLOROPLASTIC-RELATED"/>
    <property type="match status" value="1"/>
</dbReference>
<dbReference type="Pfam" id="PF00162">
    <property type="entry name" value="PGK"/>
    <property type="match status" value="1"/>
</dbReference>
<dbReference type="PIRSF" id="PIRSF000724">
    <property type="entry name" value="Pgk"/>
    <property type="match status" value="1"/>
</dbReference>
<dbReference type="PRINTS" id="PR00477">
    <property type="entry name" value="PHGLYCKINASE"/>
</dbReference>
<dbReference type="SUPFAM" id="SSF53748">
    <property type="entry name" value="Phosphoglycerate kinase"/>
    <property type="match status" value="1"/>
</dbReference>
<dbReference type="PROSITE" id="PS00111">
    <property type="entry name" value="PGLYCERATE_KINASE"/>
    <property type="match status" value="1"/>
</dbReference>
<organism>
    <name type="scientific">Francisella tularensis subsp. holarctica (strain FTNF002-00 / FTA)</name>
    <dbReference type="NCBI Taxonomy" id="458234"/>
    <lineage>
        <taxon>Bacteria</taxon>
        <taxon>Pseudomonadati</taxon>
        <taxon>Pseudomonadota</taxon>
        <taxon>Gammaproteobacteria</taxon>
        <taxon>Thiotrichales</taxon>
        <taxon>Francisellaceae</taxon>
        <taxon>Francisella</taxon>
    </lineage>
</organism>